<feature type="chain" id="PRO_0000123796" description="Probable auxin efflux carrier component 5a">
    <location>
        <begin position="1"/>
        <end position="363"/>
    </location>
</feature>
<feature type="transmembrane region" description="Helical" evidence="1">
    <location>
        <begin position="7"/>
        <end position="27"/>
    </location>
</feature>
<feature type="transmembrane region" description="Helical" evidence="1">
    <location>
        <begin position="39"/>
        <end position="59"/>
    </location>
</feature>
<feature type="transmembrane region" description="Helical" evidence="1">
    <location>
        <begin position="72"/>
        <end position="92"/>
    </location>
</feature>
<feature type="transmembrane region" description="Helical" evidence="1">
    <location>
        <begin position="103"/>
        <end position="123"/>
    </location>
</feature>
<feature type="transmembrane region" description="Helical" evidence="1">
    <location>
        <begin position="134"/>
        <end position="154"/>
    </location>
</feature>
<feature type="transmembrane region" description="Helical" evidence="1">
    <location>
        <begin position="222"/>
        <end position="242"/>
    </location>
</feature>
<feature type="transmembrane region" description="Helical" evidence="1">
    <location>
        <begin position="246"/>
        <end position="266"/>
    </location>
</feature>
<feature type="transmembrane region" description="Helical" evidence="1">
    <location>
        <begin position="281"/>
        <end position="301"/>
    </location>
</feature>
<feature type="transmembrane region" description="Helical" evidence="1">
    <location>
        <begin position="307"/>
        <end position="327"/>
    </location>
</feature>
<feature type="transmembrane region" description="Helical" evidence="1">
    <location>
        <begin position="342"/>
        <end position="362"/>
    </location>
</feature>
<feature type="sequence conflict" description="In Ref. 5; AK066552." evidence="5" ref="5">
    <original>A</original>
    <variation>V</variation>
    <location>
        <position position="159"/>
    </location>
</feature>
<feature type="sequence conflict" description="In Ref. 5; AK066552." evidence="5" ref="5">
    <original>M</original>
    <variation>V</variation>
    <location>
        <position position="294"/>
    </location>
</feature>
<sequence>MIGWGDVYKVVAATVPLYFALFLGYGSVRWWRIFTREQCDAVNRLVAFFALPFFTFEFTLHTDPFQVNYRAVAADVISKAVIVAVIGAWARFMSKGGCAVSWSITSFSLSTLTNSLVVGVPMARAMYGEWAQQLVVQLSVFQAIVWLTLLLFVLEVRKAAIGMYVDGAEAAAAAGKDVEAAGAAAAAGTVVVAAAAGKPSLWALVKVVAHKLARNPNTYASFVGITWACLANRLHIALPSAFEGSVLIMSKSGTGMAMFSMGLFMAQQEKIIACGTSFAALGLVLKFALGPAAMAIGSIAVGLRGDVLRVAIIQAALPQSITSFIFAKEYGLHADVLSTAVIFGMLVSLPLLVGFYIVLELIR</sequence>
<keyword id="KW-0927">Auxin signaling pathway</keyword>
<keyword id="KW-0472">Membrane</keyword>
<keyword id="KW-1185">Reference proteome</keyword>
<keyword id="KW-0812">Transmembrane</keyword>
<keyword id="KW-1133">Transmembrane helix</keyword>
<keyword id="KW-0813">Transport</keyword>
<dbReference type="EMBL" id="AP003437">
    <property type="protein sequence ID" value="BAD87633.1"/>
    <property type="molecule type" value="Genomic_DNA"/>
</dbReference>
<dbReference type="EMBL" id="AP008207">
    <property type="protein sequence ID" value="BAF07128.1"/>
    <property type="molecule type" value="Genomic_DNA"/>
</dbReference>
<dbReference type="EMBL" id="AP014957">
    <property type="protein sequence ID" value="BAS75920.1"/>
    <property type="molecule type" value="Genomic_DNA"/>
</dbReference>
<dbReference type="EMBL" id="AK066552">
    <property type="status" value="NOT_ANNOTATED_CDS"/>
    <property type="molecule type" value="mRNA"/>
</dbReference>
<dbReference type="EMBL" id="BR000834">
    <property type="protein sequence ID" value="FAA00683.1"/>
    <property type="molecule type" value="Genomic_DNA"/>
</dbReference>
<dbReference type="RefSeq" id="XP_015621857.1">
    <property type="nucleotide sequence ID" value="XM_015766371.1"/>
</dbReference>
<dbReference type="SMR" id="Q5JLM1"/>
<dbReference type="FunCoup" id="Q5JLM1">
    <property type="interactions" value="10"/>
</dbReference>
<dbReference type="PaxDb" id="39947-Q5JLM1"/>
<dbReference type="EnsemblPlants" id="Os01t0919800-01">
    <property type="protein sequence ID" value="Os01t0919800-01"/>
    <property type="gene ID" value="Os01g0919800"/>
</dbReference>
<dbReference type="Gramene" id="Os01t0919800-01">
    <property type="protein sequence ID" value="Os01t0919800-01"/>
    <property type="gene ID" value="Os01g0919800"/>
</dbReference>
<dbReference type="KEGG" id="dosa:Os01g0919800"/>
<dbReference type="eggNOG" id="ENOG502QS1X">
    <property type="taxonomic scope" value="Eukaryota"/>
</dbReference>
<dbReference type="HOGENOM" id="CLU_019285_0_0_1"/>
<dbReference type="InParanoid" id="Q5JLM1"/>
<dbReference type="OMA" id="YYAVLEF"/>
<dbReference type="OrthoDB" id="2133778at2759"/>
<dbReference type="Proteomes" id="UP000000763">
    <property type="component" value="Chromosome 1"/>
</dbReference>
<dbReference type="Proteomes" id="UP000059680">
    <property type="component" value="Chromosome 1"/>
</dbReference>
<dbReference type="GO" id="GO:0071944">
    <property type="term" value="C:cell periphery"/>
    <property type="evidence" value="ECO:0000250"/>
    <property type="project" value="UniProtKB"/>
</dbReference>
<dbReference type="GO" id="GO:0005783">
    <property type="term" value="C:endoplasmic reticulum"/>
    <property type="evidence" value="ECO:0000318"/>
    <property type="project" value="GO_Central"/>
</dbReference>
<dbReference type="GO" id="GO:0005886">
    <property type="term" value="C:plasma membrane"/>
    <property type="evidence" value="ECO:0000250"/>
    <property type="project" value="UniProtKB"/>
</dbReference>
<dbReference type="GO" id="GO:0010329">
    <property type="term" value="F:auxin efflux transmembrane transporter activity"/>
    <property type="evidence" value="ECO:0000250"/>
    <property type="project" value="UniProtKB"/>
</dbReference>
<dbReference type="GO" id="GO:0042802">
    <property type="term" value="F:identical protein binding"/>
    <property type="evidence" value="ECO:0000250"/>
    <property type="project" value="UniProtKB"/>
</dbReference>
<dbReference type="GO" id="GO:0042803">
    <property type="term" value="F:protein homodimerization activity"/>
    <property type="evidence" value="ECO:0000250"/>
    <property type="project" value="UniProtKB"/>
</dbReference>
<dbReference type="GO" id="GO:0010315">
    <property type="term" value="P:auxin export across the plasma membrane"/>
    <property type="evidence" value="ECO:0000250"/>
    <property type="project" value="UniProtKB"/>
</dbReference>
<dbReference type="GO" id="GO:0009926">
    <property type="term" value="P:auxin polar transport"/>
    <property type="evidence" value="ECO:0000318"/>
    <property type="project" value="GO_Central"/>
</dbReference>
<dbReference type="GO" id="GO:0009734">
    <property type="term" value="P:auxin-activated signaling pathway"/>
    <property type="evidence" value="ECO:0007669"/>
    <property type="project" value="UniProtKB-KW"/>
</dbReference>
<dbReference type="InterPro" id="IPR014024">
    <property type="entry name" value="Auxin_eff_plant"/>
</dbReference>
<dbReference type="InterPro" id="IPR051107">
    <property type="entry name" value="Auxin_Efflux_Carrier"/>
</dbReference>
<dbReference type="InterPro" id="IPR004776">
    <property type="entry name" value="Mem_transp_PIN-like"/>
</dbReference>
<dbReference type="NCBIfam" id="TIGR00946">
    <property type="entry name" value="2a69"/>
    <property type="match status" value="1"/>
</dbReference>
<dbReference type="PANTHER" id="PTHR31752">
    <property type="entry name" value="AUXIN EFFLUX CARRIER COMPONENT 1B-RELATED"/>
    <property type="match status" value="1"/>
</dbReference>
<dbReference type="PANTHER" id="PTHR31752:SF2">
    <property type="entry name" value="AUXIN EFFLUX CARRIER COMPONENT 5"/>
    <property type="match status" value="1"/>
</dbReference>
<dbReference type="Pfam" id="PF03547">
    <property type="entry name" value="Mem_trans"/>
    <property type="match status" value="1"/>
</dbReference>
<organism>
    <name type="scientific">Oryza sativa subsp. japonica</name>
    <name type="common">Rice</name>
    <dbReference type="NCBI Taxonomy" id="39947"/>
    <lineage>
        <taxon>Eukaryota</taxon>
        <taxon>Viridiplantae</taxon>
        <taxon>Streptophyta</taxon>
        <taxon>Embryophyta</taxon>
        <taxon>Tracheophyta</taxon>
        <taxon>Spermatophyta</taxon>
        <taxon>Magnoliopsida</taxon>
        <taxon>Liliopsida</taxon>
        <taxon>Poales</taxon>
        <taxon>Poaceae</taxon>
        <taxon>BOP clade</taxon>
        <taxon>Oryzoideae</taxon>
        <taxon>Oryzeae</taxon>
        <taxon>Oryzinae</taxon>
        <taxon>Oryza</taxon>
        <taxon>Oryza sativa</taxon>
    </lineage>
</organism>
<protein>
    <recommendedName>
        <fullName evidence="5">Probable auxin efflux carrier component 5a</fullName>
        <shortName evidence="4">OsPIN5a</shortName>
    </recommendedName>
</protein>
<evidence type="ECO:0000255" key="1"/>
<evidence type="ECO:0000269" key="2">
    <source>
    </source>
</evidence>
<evidence type="ECO:0000269" key="3">
    <source ref="6"/>
</evidence>
<evidence type="ECO:0000303" key="4">
    <source ref="6"/>
</evidence>
<evidence type="ECO:0000305" key="5"/>
<evidence type="ECO:0000312" key="6">
    <source>
        <dbReference type="EMBL" id="BAD87633.1"/>
    </source>
</evidence>
<evidence type="ECO:0000312" key="7">
    <source>
        <dbReference type="EMBL" id="BAS75920.1"/>
    </source>
</evidence>
<gene>
    <name evidence="4" type="primary">PIN5A</name>
    <name evidence="7" type="ordered locus">Os01g0919800</name>
    <name evidence="5" type="ordered locus">LOC_Os01g69070</name>
    <name evidence="6" type="ORF">P0678F11.27</name>
</gene>
<accession>Q5JLM1</accession>
<accession>Q0JGK0</accession>
<comment type="function">
    <text evidence="5">May act as a component of the auxin efflux carrier.</text>
</comment>
<comment type="subcellular location">
    <subcellularLocation>
        <location evidence="1">Membrane</location>
        <topology evidence="1">Multi-pass membrane protein</topology>
    </subcellularLocation>
</comment>
<comment type="tissue specificity">
    <text evidence="2 3">Expressed in leaves, shoot apex and panicles (Ref.6). Expressed in roots, stem bases, stems, leaves and young panicles (PubMed:19825657).</text>
</comment>
<comment type="similarity">
    <text evidence="5">Belongs to the auxin efflux carrier (TC 2.A.69.1) family.</text>
</comment>
<reference key="1">
    <citation type="journal article" date="2002" name="Nature">
        <title>The genome sequence and structure of rice chromosome 1.</title>
        <authorList>
            <person name="Sasaki T."/>
            <person name="Matsumoto T."/>
            <person name="Yamamoto K."/>
            <person name="Sakata K."/>
            <person name="Baba T."/>
            <person name="Katayose Y."/>
            <person name="Wu J."/>
            <person name="Niimura Y."/>
            <person name="Cheng Z."/>
            <person name="Nagamura Y."/>
            <person name="Antonio B.A."/>
            <person name="Kanamori H."/>
            <person name="Hosokawa S."/>
            <person name="Masukawa M."/>
            <person name="Arikawa K."/>
            <person name="Chiden Y."/>
            <person name="Hayashi M."/>
            <person name="Okamoto M."/>
            <person name="Ando T."/>
            <person name="Aoki H."/>
            <person name="Arita K."/>
            <person name="Hamada M."/>
            <person name="Harada C."/>
            <person name="Hijishita S."/>
            <person name="Honda M."/>
            <person name="Ichikawa Y."/>
            <person name="Idonuma A."/>
            <person name="Iijima M."/>
            <person name="Ikeda M."/>
            <person name="Ikeno M."/>
            <person name="Ito S."/>
            <person name="Ito T."/>
            <person name="Ito Y."/>
            <person name="Ito Y."/>
            <person name="Iwabuchi A."/>
            <person name="Kamiya K."/>
            <person name="Karasawa W."/>
            <person name="Katagiri S."/>
            <person name="Kikuta A."/>
            <person name="Kobayashi N."/>
            <person name="Kono I."/>
            <person name="Machita K."/>
            <person name="Maehara T."/>
            <person name="Mizuno H."/>
            <person name="Mizubayashi T."/>
            <person name="Mukai Y."/>
            <person name="Nagasaki H."/>
            <person name="Nakashima M."/>
            <person name="Nakama Y."/>
            <person name="Nakamichi Y."/>
            <person name="Nakamura M."/>
            <person name="Namiki N."/>
            <person name="Negishi M."/>
            <person name="Ohta I."/>
            <person name="Ono N."/>
            <person name="Saji S."/>
            <person name="Sakai K."/>
            <person name="Shibata M."/>
            <person name="Shimokawa T."/>
            <person name="Shomura A."/>
            <person name="Song J."/>
            <person name="Takazaki Y."/>
            <person name="Terasawa K."/>
            <person name="Tsuji K."/>
            <person name="Waki K."/>
            <person name="Yamagata H."/>
            <person name="Yamane H."/>
            <person name="Yoshiki S."/>
            <person name="Yoshihara R."/>
            <person name="Yukawa K."/>
            <person name="Zhong H."/>
            <person name="Iwama H."/>
            <person name="Endo T."/>
            <person name="Ito H."/>
            <person name="Hahn J.H."/>
            <person name="Kim H.-I."/>
            <person name="Eun M.-Y."/>
            <person name="Yano M."/>
            <person name="Jiang J."/>
            <person name="Gojobori T."/>
        </authorList>
    </citation>
    <scope>NUCLEOTIDE SEQUENCE [LARGE SCALE GENOMIC DNA]</scope>
    <source>
        <strain>cv. Nipponbare</strain>
    </source>
</reference>
<reference key="2">
    <citation type="journal article" date="2005" name="Nature">
        <title>The map-based sequence of the rice genome.</title>
        <authorList>
            <consortium name="International rice genome sequencing project (IRGSP)"/>
        </authorList>
    </citation>
    <scope>NUCLEOTIDE SEQUENCE [LARGE SCALE GENOMIC DNA]</scope>
    <source>
        <strain>cv. Nipponbare</strain>
    </source>
</reference>
<reference key="3">
    <citation type="journal article" date="2008" name="Nucleic Acids Res.">
        <title>The rice annotation project database (RAP-DB): 2008 update.</title>
        <authorList>
            <consortium name="The rice annotation project (RAP)"/>
        </authorList>
    </citation>
    <scope>GENOME REANNOTATION</scope>
    <source>
        <strain>cv. Nipponbare</strain>
    </source>
</reference>
<reference key="4">
    <citation type="journal article" date="2013" name="Rice">
        <title>Improvement of the Oryza sativa Nipponbare reference genome using next generation sequence and optical map data.</title>
        <authorList>
            <person name="Kawahara Y."/>
            <person name="de la Bastide M."/>
            <person name="Hamilton J.P."/>
            <person name="Kanamori H."/>
            <person name="McCombie W.R."/>
            <person name="Ouyang S."/>
            <person name="Schwartz D.C."/>
            <person name="Tanaka T."/>
            <person name="Wu J."/>
            <person name="Zhou S."/>
            <person name="Childs K.L."/>
            <person name="Davidson R.M."/>
            <person name="Lin H."/>
            <person name="Quesada-Ocampo L."/>
            <person name="Vaillancourt B."/>
            <person name="Sakai H."/>
            <person name="Lee S.S."/>
            <person name="Kim J."/>
            <person name="Numa H."/>
            <person name="Itoh T."/>
            <person name="Buell C.R."/>
            <person name="Matsumoto T."/>
        </authorList>
    </citation>
    <scope>GENOME REANNOTATION</scope>
    <source>
        <strain>cv. Nipponbare</strain>
    </source>
</reference>
<reference key="5">
    <citation type="journal article" date="2003" name="Science">
        <title>Collection, mapping, and annotation of over 28,000 cDNA clones from japonica rice.</title>
        <authorList>
            <consortium name="The rice full-length cDNA consortium"/>
        </authorList>
    </citation>
    <scope>NUCLEOTIDE SEQUENCE [LARGE SCALE MRNA]</scope>
    <source>
        <strain>cv. Nipponbare</strain>
    </source>
</reference>
<reference key="6">
    <citation type="journal article" date="2010" name="Plant Sci.">
        <title>Identification and expression analysis of PIN genes in rice.</title>
        <authorList>
            <person name="Miyashita Y."/>
            <person name="Takasugi T."/>
            <person name="Ito Y."/>
        </authorList>
    </citation>
    <scope>IDENTIFICATION</scope>
    <scope>TISSUE SPECIFICITY</scope>
</reference>
<reference key="7">
    <citation type="journal article" date="2009" name="Mol. Plant">
        <title>Expression of PIN genes in rice (Oryza sativa L.): tissue specificity and regulation by hormones.</title>
        <authorList>
            <person name="Wang J.R."/>
            <person name="Hu H."/>
            <person name="Wang G.H."/>
            <person name="Li J."/>
            <person name="Chen J.Y."/>
            <person name="Wu P."/>
        </authorList>
    </citation>
    <scope>TISSUE SPECIFICITY</scope>
</reference>
<name>PIN5A_ORYSJ</name>
<proteinExistence type="evidence at transcript level"/>